<sequence>MAKKVTGMIKLQLPAGKATPAPPVGPALGQHGVNIMGFCKEFNAKTADKAGLIIPVVITVYQDRSFSFILKTPPAAVLIKKELGLESGSGVPNRTKVGNITKEQIRKIAELKMPDLNAATIETAMSMIEGTARSMGVVVVE</sequence>
<accession>Q8XHR4</accession>
<keyword id="KW-0488">Methylation</keyword>
<keyword id="KW-1185">Reference proteome</keyword>
<keyword id="KW-0687">Ribonucleoprotein</keyword>
<keyword id="KW-0689">Ribosomal protein</keyword>
<keyword id="KW-0694">RNA-binding</keyword>
<keyword id="KW-0699">rRNA-binding</keyword>
<comment type="function">
    <text evidence="1">Forms part of the ribosomal stalk which helps the ribosome interact with GTP-bound translation factors.</text>
</comment>
<comment type="subunit">
    <text evidence="1">Part of the ribosomal stalk of the 50S ribosomal subunit. Interacts with L10 and the large rRNA to form the base of the stalk. L10 forms an elongated spine to which L12 dimers bind in a sequential fashion forming a multimeric L10(L12)X complex.</text>
</comment>
<comment type="PTM">
    <text evidence="1">One or more lysine residues are methylated.</text>
</comment>
<comment type="similarity">
    <text evidence="1">Belongs to the universal ribosomal protein uL11 family.</text>
</comment>
<reference key="1">
    <citation type="journal article" date="2002" name="Proc. Natl. Acad. Sci. U.S.A.">
        <title>Complete genome sequence of Clostridium perfringens, an anaerobic flesh-eater.</title>
        <authorList>
            <person name="Shimizu T."/>
            <person name="Ohtani K."/>
            <person name="Hirakawa H."/>
            <person name="Ohshima K."/>
            <person name="Yamashita A."/>
            <person name="Shiba T."/>
            <person name="Ogasawara N."/>
            <person name="Hattori M."/>
            <person name="Kuhara S."/>
            <person name="Hayashi H."/>
        </authorList>
    </citation>
    <scope>NUCLEOTIDE SEQUENCE [LARGE SCALE GENOMIC DNA]</scope>
    <source>
        <strain>13 / Type A</strain>
    </source>
</reference>
<dbReference type="EMBL" id="BA000016">
    <property type="protein sequence ID" value="BAB82123.1"/>
    <property type="molecule type" value="Genomic_DNA"/>
</dbReference>
<dbReference type="RefSeq" id="WP_003452181.1">
    <property type="nucleotide sequence ID" value="NC_003366.1"/>
</dbReference>
<dbReference type="SMR" id="Q8XHR4"/>
<dbReference type="STRING" id="195102.gene:10491734"/>
<dbReference type="GeneID" id="93000997"/>
<dbReference type="KEGG" id="cpe:CPE2417"/>
<dbReference type="HOGENOM" id="CLU_074237_2_1_9"/>
<dbReference type="Proteomes" id="UP000000818">
    <property type="component" value="Chromosome"/>
</dbReference>
<dbReference type="GO" id="GO:0022625">
    <property type="term" value="C:cytosolic large ribosomal subunit"/>
    <property type="evidence" value="ECO:0007669"/>
    <property type="project" value="TreeGrafter"/>
</dbReference>
<dbReference type="GO" id="GO:0070180">
    <property type="term" value="F:large ribosomal subunit rRNA binding"/>
    <property type="evidence" value="ECO:0007669"/>
    <property type="project" value="UniProtKB-UniRule"/>
</dbReference>
<dbReference type="GO" id="GO:0003735">
    <property type="term" value="F:structural constituent of ribosome"/>
    <property type="evidence" value="ECO:0007669"/>
    <property type="project" value="InterPro"/>
</dbReference>
<dbReference type="GO" id="GO:0006412">
    <property type="term" value="P:translation"/>
    <property type="evidence" value="ECO:0007669"/>
    <property type="project" value="UniProtKB-UniRule"/>
</dbReference>
<dbReference type="CDD" id="cd00349">
    <property type="entry name" value="Ribosomal_L11"/>
    <property type="match status" value="1"/>
</dbReference>
<dbReference type="FunFam" id="1.10.10.250:FF:000001">
    <property type="entry name" value="50S ribosomal protein L11"/>
    <property type="match status" value="1"/>
</dbReference>
<dbReference type="FunFam" id="3.30.1550.10:FF:000001">
    <property type="entry name" value="50S ribosomal protein L11"/>
    <property type="match status" value="1"/>
</dbReference>
<dbReference type="Gene3D" id="1.10.10.250">
    <property type="entry name" value="Ribosomal protein L11, C-terminal domain"/>
    <property type="match status" value="1"/>
</dbReference>
<dbReference type="Gene3D" id="3.30.1550.10">
    <property type="entry name" value="Ribosomal protein L11/L12, N-terminal domain"/>
    <property type="match status" value="1"/>
</dbReference>
<dbReference type="HAMAP" id="MF_00736">
    <property type="entry name" value="Ribosomal_uL11"/>
    <property type="match status" value="1"/>
</dbReference>
<dbReference type="InterPro" id="IPR000911">
    <property type="entry name" value="Ribosomal_uL11"/>
</dbReference>
<dbReference type="InterPro" id="IPR006519">
    <property type="entry name" value="Ribosomal_uL11_bac-typ"/>
</dbReference>
<dbReference type="InterPro" id="IPR020783">
    <property type="entry name" value="Ribosomal_uL11_C"/>
</dbReference>
<dbReference type="InterPro" id="IPR036769">
    <property type="entry name" value="Ribosomal_uL11_C_sf"/>
</dbReference>
<dbReference type="InterPro" id="IPR020784">
    <property type="entry name" value="Ribosomal_uL11_N"/>
</dbReference>
<dbReference type="InterPro" id="IPR036796">
    <property type="entry name" value="Ribosomal_uL11_N_sf"/>
</dbReference>
<dbReference type="NCBIfam" id="TIGR01632">
    <property type="entry name" value="L11_bact"/>
    <property type="match status" value="1"/>
</dbReference>
<dbReference type="PANTHER" id="PTHR11661">
    <property type="entry name" value="60S RIBOSOMAL PROTEIN L12"/>
    <property type="match status" value="1"/>
</dbReference>
<dbReference type="PANTHER" id="PTHR11661:SF1">
    <property type="entry name" value="LARGE RIBOSOMAL SUBUNIT PROTEIN UL11M"/>
    <property type="match status" value="1"/>
</dbReference>
<dbReference type="Pfam" id="PF00298">
    <property type="entry name" value="Ribosomal_L11"/>
    <property type="match status" value="1"/>
</dbReference>
<dbReference type="Pfam" id="PF03946">
    <property type="entry name" value="Ribosomal_L11_N"/>
    <property type="match status" value="1"/>
</dbReference>
<dbReference type="SMART" id="SM00649">
    <property type="entry name" value="RL11"/>
    <property type="match status" value="1"/>
</dbReference>
<dbReference type="SUPFAM" id="SSF54747">
    <property type="entry name" value="Ribosomal L11/L12e N-terminal domain"/>
    <property type="match status" value="1"/>
</dbReference>
<dbReference type="SUPFAM" id="SSF46906">
    <property type="entry name" value="Ribosomal protein L11, C-terminal domain"/>
    <property type="match status" value="1"/>
</dbReference>
<evidence type="ECO:0000255" key="1">
    <source>
        <dbReference type="HAMAP-Rule" id="MF_00736"/>
    </source>
</evidence>
<evidence type="ECO:0000305" key="2"/>
<protein>
    <recommendedName>
        <fullName evidence="1">Large ribosomal subunit protein uL11</fullName>
    </recommendedName>
    <alternativeName>
        <fullName evidence="2">50S ribosomal protein L11</fullName>
    </alternativeName>
</protein>
<name>RL11_CLOPE</name>
<organism>
    <name type="scientific">Clostridium perfringens (strain 13 / Type A)</name>
    <dbReference type="NCBI Taxonomy" id="195102"/>
    <lineage>
        <taxon>Bacteria</taxon>
        <taxon>Bacillati</taxon>
        <taxon>Bacillota</taxon>
        <taxon>Clostridia</taxon>
        <taxon>Eubacteriales</taxon>
        <taxon>Clostridiaceae</taxon>
        <taxon>Clostridium</taxon>
    </lineage>
</organism>
<gene>
    <name evidence="1" type="primary">rplK</name>
    <name type="ordered locus">CPE2417</name>
</gene>
<proteinExistence type="inferred from homology"/>
<feature type="chain" id="PRO_0000104274" description="Large ribosomal subunit protein uL11">
    <location>
        <begin position="1"/>
        <end position="141"/>
    </location>
</feature>